<accession>B2U2V1</accession>
<protein>
    <recommendedName>
        <fullName evidence="1">Protein TusC</fullName>
    </recommendedName>
    <alternativeName>
        <fullName evidence="1">tRNA 2-thiouridine synthesizing protein C</fullName>
    </alternativeName>
</protein>
<comment type="function">
    <text evidence="1">Part of a sulfur-relay system required for 2-thiolation of 5-methylaminomethyl-2-thiouridine (mnm(5)s(2)U) at tRNA wobble positions.</text>
</comment>
<comment type="subunit">
    <text evidence="1">Heterohexamer, formed by a dimer of trimers. The hexameric TusBCD complex contains 2 copies each of TusB, TusC and TusD. The TusBCD complex interacts with TusE.</text>
</comment>
<comment type="subcellular location">
    <subcellularLocation>
        <location evidence="1">Cytoplasm</location>
    </subcellularLocation>
</comment>
<comment type="similarity">
    <text evidence="1">Belongs to the DsrF/TusC family.</text>
</comment>
<feature type="chain" id="PRO_1000122852" description="Protein TusC">
    <location>
        <begin position="1"/>
        <end position="119"/>
    </location>
</feature>
<sequence length="119" mass="13035">MKRIAFVFSTAPHGTAAGREGLDALLATSALTDDLAVFFIADGVFQLLSGQKPDAVLARDYIATFKLLGLYDIEQCWVCAASLRERGLDPQTPFVVEATPLEADALRRELANYDVILRF</sequence>
<name>TUSC_SHIB3</name>
<organism>
    <name type="scientific">Shigella boydii serotype 18 (strain CDC 3083-94 / BS512)</name>
    <dbReference type="NCBI Taxonomy" id="344609"/>
    <lineage>
        <taxon>Bacteria</taxon>
        <taxon>Pseudomonadati</taxon>
        <taxon>Pseudomonadota</taxon>
        <taxon>Gammaproteobacteria</taxon>
        <taxon>Enterobacterales</taxon>
        <taxon>Enterobacteriaceae</taxon>
        <taxon>Shigella</taxon>
    </lineage>
</organism>
<evidence type="ECO:0000255" key="1">
    <source>
        <dbReference type="HAMAP-Rule" id="MF_00389"/>
    </source>
</evidence>
<dbReference type="EMBL" id="CP001063">
    <property type="protein sequence ID" value="ACD06481.1"/>
    <property type="molecule type" value="Genomic_DNA"/>
</dbReference>
<dbReference type="RefSeq" id="WP_000820720.1">
    <property type="nucleotide sequence ID" value="NC_010658.1"/>
</dbReference>
<dbReference type="SMR" id="B2U2V1"/>
<dbReference type="STRING" id="344609.SbBS512_E3718"/>
<dbReference type="GeneID" id="75206287"/>
<dbReference type="KEGG" id="sbc:SbBS512_E3718"/>
<dbReference type="HOGENOM" id="CLU_155943_1_0_6"/>
<dbReference type="Proteomes" id="UP000001030">
    <property type="component" value="Chromosome"/>
</dbReference>
<dbReference type="GO" id="GO:0005737">
    <property type="term" value="C:cytoplasm"/>
    <property type="evidence" value="ECO:0007669"/>
    <property type="project" value="UniProtKB-SubCell"/>
</dbReference>
<dbReference type="GO" id="GO:0008033">
    <property type="term" value="P:tRNA processing"/>
    <property type="evidence" value="ECO:0007669"/>
    <property type="project" value="UniProtKB-UniRule"/>
</dbReference>
<dbReference type="FunFam" id="3.40.1260.10:FF:000004">
    <property type="entry name" value="Sulfurtransferase TusC"/>
    <property type="match status" value="1"/>
</dbReference>
<dbReference type="Gene3D" id="3.40.1260.10">
    <property type="entry name" value="DsrEFH-like"/>
    <property type="match status" value="1"/>
</dbReference>
<dbReference type="HAMAP" id="MF_00389">
    <property type="entry name" value="Thiourid_synth_C"/>
    <property type="match status" value="1"/>
</dbReference>
<dbReference type="InterPro" id="IPR027396">
    <property type="entry name" value="DsrEFH-like"/>
</dbReference>
<dbReference type="InterPro" id="IPR003787">
    <property type="entry name" value="Sulphur_relay_DsrE/F-like"/>
</dbReference>
<dbReference type="InterPro" id="IPR037450">
    <property type="entry name" value="Sulphur_relay_TusC"/>
</dbReference>
<dbReference type="InterPro" id="IPR017462">
    <property type="entry name" value="Sulphur_relay_TusC/DsrF"/>
</dbReference>
<dbReference type="NCBIfam" id="NF001238">
    <property type="entry name" value="PRK00211.1"/>
    <property type="match status" value="1"/>
</dbReference>
<dbReference type="NCBIfam" id="TIGR03010">
    <property type="entry name" value="sulf_tusC_dsrF"/>
    <property type="match status" value="1"/>
</dbReference>
<dbReference type="PANTHER" id="PTHR38780">
    <property type="entry name" value="PROTEIN TUSC"/>
    <property type="match status" value="1"/>
</dbReference>
<dbReference type="PANTHER" id="PTHR38780:SF1">
    <property type="entry name" value="PROTEIN TUSC"/>
    <property type="match status" value="1"/>
</dbReference>
<dbReference type="Pfam" id="PF02635">
    <property type="entry name" value="DsrE"/>
    <property type="match status" value="1"/>
</dbReference>
<dbReference type="SUPFAM" id="SSF75169">
    <property type="entry name" value="DsrEFH-like"/>
    <property type="match status" value="1"/>
</dbReference>
<gene>
    <name evidence="1" type="primary">tusC</name>
    <name type="ordered locus">SbBS512_E3718</name>
</gene>
<reference key="1">
    <citation type="submission" date="2008-05" db="EMBL/GenBank/DDBJ databases">
        <title>Complete sequence of Shigella boydii serotype 18 strain BS512.</title>
        <authorList>
            <person name="Rasko D.A."/>
            <person name="Rosovitz M."/>
            <person name="Maurelli A.T."/>
            <person name="Myers G."/>
            <person name="Seshadri R."/>
            <person name="Cer R."/>
            <person name="Jiang L."/>
            <person name="Ravel J."/>
            <person name="Sebastian Y."/>
        </authorList>
    </citation>
    <scope>NUCLEOTIDE SEQUENCE [LARGE SCALE GENOMIC DNA]</scope>
    <source>
        <strain>CDC 3083-94 / BS512</strain>
    </source>
</reference>
<proteinExistence type="inferred from homology"/>
<keyword id="KW-0963">Cytoplasm</keyword>
<keyword id="KW-1185">Reference proteome</keyword>
<keyword id="KW-0819">tRNA processing</keyword>